<protein>
    <recommendedName>
        <fullName evidence="1">Small ribosomal subunit protein RACK1</fullName>
    </recommendedName>
    <alternativeName>
        <fullName>Antigen LACK</fullName>
    </alternativeName>
    <alternativeName>
        <fullName>Guanine nucleotide-binding protein subunit beta-like protein</fullName>
    </alternativeName>
    <alternativeName>
        <fullName>LiP36</fullName>
    </alternativeName>
    <alternativeName>
        <fullName>p36Li</fullName>
    </alternativeName>
</protein>
<organism>
    <name type="scientific">Leishmania infantum</name>
    <dbReference type="NCBI Taxonomy" id="5671"/>
    <lineage>
        <taxon>Eukaryota</taxon>
        <taxon>Discoba</taxon>
        <taxon>Euglenozoa</taxon>
        <taxon>Kinetoplastea</taxon>
        <taxon>Metakinetoplastina</taxon>
        <taxon>Trypanosomatida</taxon>
        <taxon>Trypanosomatidae</taxon>
        <taxon>Leishmaniinae</taxon>
        <taxon>Leishmania</taxon>
    </lineage>
</organism>
<name>GBLP_LEIIN</name>
<feature type="chain" id="PRO_0000127744" description="Small ribosomal subunit protein RACK1">
    <location>
        <begin position="1"/>
        <end position="312"/>
    </location>
</feature>
<feature type="repeat" description="WD 1">
    <location>
        <begin position="9"/>
        <end position="42"/>
    </location>
</feature>
<feature type="repeat" description="WD 2">
    <location>
        <begin position="63"/>
        <end position="93"/>
    </location>
</feature>
<feature type="repeat" description="WD 3">
    <location>
        <begin position="105"/>
        <end position="135"/>
    </location>
</feature>
<feature type="repeat" description="WD 4">
    <location>
        <begin position="148"/>
        <end position="180"/>
    </location>
</feature>
<feature type="repeat" description="WD 5">
    <location>
        <begin position="192"/>
        <end position="222"/>
    </location>
</feature>
<feature type="repeat" description="WD 6">
    <location>
        <begin position="233"/>
        <end position="262"/>
    </location>
</feature>
<feature type="repeat" description="WD 7">
    <location>
        <begin position="279"/>
        <end position="307"/>
    </location>
</feature>
<sequence>MNYEGHLKGHRGWVTSLACPQQAGSYIKVVSTSRDGTAISWKANPDRHSVDSDYGLPSHRLEGHTGFVSCVSLAHATDYALTASWDRSIRMWDLRNGQCQRKFLKHTKDVLAVAFSPDDRLIVSAGRDNVIRVWNVAGECMHEFLRDGHEDWVSSICFSPSLEHPIVVSGSWDNTIKVWNVNGGKCERTLKGHSNYVSTVTVSPDGSLCASGGKDGAALLWDLSTGEQLFKINVESPINQIAFSPNRFWMCVATERSLSVYDLESKAVIAELTPDGAKPSECISIAWSADGNTLYSGHKDNLIRVWSISDAE</sequence>
<reference key="1">
    <citation type="journal article" date="1999" name="Eur. J. Biochem.">
        <title>Molecular cloning, cell localization and binding affinity to DNA replication proteins of the p36/LACK protective antigen from Leishmania infantum.</title>
        <authorList>
            <person name="Gonzalez-Aseguinolaza G."/>
            <person name="Taladriz S."/>
            <person name="Marquet A."/>
            <person name="Larraga V."/>
        </authorList>
    </citation>
    <scope>NUCLEOTIDE SEQUENCE [MRNA]</scope>
    <source>
        <strain>PB75</strain>
    </source>
</reference>
<reference key="2">
    <citation type="journal article" date="2007" name="Nat. Genet.">
        <title>Comparative genomic analysis of three Leishmania species that cause diverse human disease.</title>
        <authorList>
            <person name="Peacock C.S."/>
            <person name="Seeger K."/>
            <person name="Harris D."/>
            <person name="Murphy L."/>
            <person name="Ruiz J.C."/>
            <person name="Quail M.A."/>
            <person name="Peters N."/>
            <person name="Adlem E."/>
            <person name="Tivey A."/>
            <person name="Aslett M."/>
            <person name="Kerhornou A."/>
            <person name="Ivens A."/>
            <person name="Fraser A."/>
            <person name="Rajandream M.-A."/>
            <person name="Carver T."/>
            <person name="Norbertczak H."/>
            <person name="Chillingworth T."/>
            <person name="Hance Z."/>
            <person name="Jagels K."/>
            <person name="Moule S."/>
            <person name="Ormond D."/>
            <person name="Rutter S."/>
            <person name="Sqaures R."/>
            <person name="Whitehead S."/>
            <person name="Rabbinowitsch E."/>
            <person name="Arrowsmith C."/>
            <person name="White B."/>
            <person name="Thurston S."/>
            <person name="Bringaud F."/>
            <person name="Baldauf S.L."/>
            <person name="Faulconbridge A."/>
            <person name="Jeffares D."/>
            <person name="Depledge D.P."/>
            <person name="Oyola S.O."/>
            <person name="Hilley J.D."/>
            <person name="Brito L.O."/>
            <person name="Tosi L.R.O."/>
            <person name="Barrell B."/>
            <person name="Cruz A.K."/>
            <person name="Mottram J.C."/>
            <person name="Smith D.F."/>
            <person name="Berriman M."/>
        </authorList>
    </citation>
    <scope>NUCLEOTIDE SEQUENCE [LARGE SCALE GENOMIC DNA]</scope>
    <source>
        <strain>JPCM5</strain>
    </source>
</reference>
<accession>P62884</accession>
<accession>A4I407</accession>
<accession>A4I408</accession>
<accession>A4I409</accession>
<accession>Q27434</accession>
<keyword id="KW-1185">Reference proteome</keyword>
<keyword id="KW-0677">Repeat</keyword>
<keyword id="KW-0687">Ribonucleoprotein</keyword>
<keyword id="KW-0689">Ribosomal protein</keyword>
<keyword id="KW-0853">WD repeat</keyword>
<proteinExistence type="evidence at transcript level"/>
<gene>
    <name type="primary">LACK1</name>
    <name type="ORF">LINJ_28_2940</name>
</gene>
<gene>
    <name type="primary">LACK2</name>
    <name type="ORF">LINJ_28_2970</name>
</gene>
<comment type="developmental stage">
    <text>Expressed in both stages of the parasite life cycle.</text>
</comment>
<comment type="similarity">
    <text evidence="1">Belongs to the WD repeat G protein beta family. Ribosomal protein RACK1 subfamily.</text>
</comment>
<evidence type="ECO:0000305" key="1"/>
<dbReference type="EMBL" id="U49695">
    <property type="protein sequence ID" value="AAA91208.1"/>
    <property type="molecule type" value="mRNA"/>
</dbReference>
<dbReference type="EMBL" id="FR796460">
    <property type="protein sequence ID" value="CAM69514.2"/>
    <property type="molecule type" value="Genomic_DNA"/>
</dbReference>
<dbReference type="EMBL" id="FR796460">
    <property type="protein sequence ID" value="CAM69516.2"/>
    <property type="molecule type" value="Genomic_DNA"/>
</dbReference>
<dbReference type="RefSeq" id="XP_001470319.2">
    <property type="nucleotide sequence ID" value="XM_001470282.2"/>
</dbReference>
<dbReference type="RefSeq" id="XP_001470321.2">
    <property type="nucleotide sequence ID" value="XM_001470284.2"/>
</dbReference>
<dbReference type="SMR" id="P62884"/>
<dbReference type="FunCoup" id="P62884">
    <property type="interactions" value="497"/>
</dbReference>
<dbReference type="STRING" id="5671.P62884"/>
<dbReference type="GeneID" id="5070507"/>
<dbReference type="GeneID" id="5070509"/>
<dbReference type="KEGG" id="lif:LINJ_28_2940"/>
<dbReference type="KEGG" id="lif:LINJ_28_2970"/>
<dbReference type="VEuPathDB" id="TriTrypDB:LINF_280034800"/>
<dbReference type="eggNOG" id="KOG0279">
    <property type="taxonomic scope" value="Eukaryota"/>
</dbReference>
<dbReference type="InParanoid" id="P62884"/>
<dbReference type="OMA" id="NCKLKIN"/>
<dbReference type="Proteomes" id="UP000008153">
    <property type="component" value="Chromosome 28"/>
</dbReference>
<dbReference type="GO" id="GO:1990904">
    <property type="term" value="C:ribonucleoprotein complex"/>
    <property type="evidence" value="ECO:0007669"/>
    <property type="project" value="UniProtKB-KW"/>
</dbReference>
<dbReference type="GO" id="GO:0005840">
    <property type="term" value="C:ribosome"/>
    <property type="evidence" value="ECO:0007669"/>
    <property type="project" value="UniProtKB-KW"/>
</dbReference>
<dbReference type="GO" id="GO:0043022">
    <property type="term" value="F:ribosome binding"/>
    <property type="evidence" value="ECO:0007669"/>
    <property type="project" value="InterPro"/>
</dbReference>
<dbReference type="GO" id="GO:0045182">
    <property type="term" value="F:translation regulator activity"/>
    <property type="evidence" value="ECO:0007669"/>
    <property type="project" value="InterPro"/>
</dbReference>
<dbReference type="CDD" id="cd00200">
    <property type="entry name" value="WD40"/>
    <property type="match status" value="1"/>
</dbReference>
<dbReference type="FunFam" id="2.130.10.10:FF:000018">
    <property type="entry name" value="Receptor for activated C kinase 1"/>
    <property type="match status" value="1"/>
</dbReference>
<dbReference type="Gene3D" id="2.130.10.10">
    <property type="entry name" value="YVTN repeat-like/Quinoprotein amine dehydrogenase"/>
    <property type="match status" value="1"/>
</dbReference>
<dbReference type="InterPro" id="IPR020472">
    <property type="entry name" value="G-protein_beta_WD-40_rep"/>
</dbReference>
<dbReference type="InterPro" id="IPR045223">
    <property type="entry name" value="RACK1-like"/>
</dbReference>
<dbReference type="InterPro" id="IPR015943">
    <property type="entry name" value="WD40/YVTN_repeat-like_dom_sf"/>
</dbReference>
<dbReference type="InterPro" id="IPR019775">
    <property type="entry name" value="WD40_repeat_CS"/>
</dbReference>
<dbReference type="InterPro" id="IPR036322">
    <property type="entry name" value="WD40_repeat_dom_sf"/>
</dbReference>
<dbReference type="InterPro" id="IPR001680">
    <property type="entry name" value="WD40_rpt"/>
</dbReference>
<dbReference type="PANTHER" id="PTHR19868">
    <property type="entry name" value="RECEPTOR FOR ACTIVATED PROTEIN KINASE C RACK1"/>
    <property type="match status" value="1"/>
</dbReference>
<dbReference type="Pfam" id="PF00400">
    <property type="entry name" value="WD40"/>
    <property type="match status" value="6"/>
</dbReference>
<dbReference type="PRINTS" id="PR00320">
    <property type="entry name" value="GPROTEINBRPT"/>
</dbReference>
<dbReference type="SMART" id="SM00320">
    <property type="entry name" value="WD40"/>
    <property type="match status" value="7"/>
</dbReference>
<dbReference type="SUPFAM" id="SSF50978">
    <property type="entry name" value="WD40 repeat-like"/>
    <property type="match status" value="1"/>
</dbReference>
<dbReference type="PROSITE" id="PS00678">
    <property type="entry name" value="WD_REPEATS_1"/>
    <property type="match status" value="4"/>
</dbReference>
<dbReference type="PROSITE" id="PS50082">
    <property type="entry name" value="WD_REPEATS_2"/>
    <property type="match status" value="5"/>
</dbReference>
<dbReference type="PROSITE" id="PS50294">
    <property type="entry name" value="WD_REPEATS_REGION"/>
    <property type="match status" value="1"/>
</dbReference>